<evidence type="ECO:0000250" key="1">
    <source>
        <dbReference type="UniProtKB" id="Q02604"/>
    </source>
</evidence>
<evidence type="ECO:0000269" key="2">
    <source>
    </source>
</evidence>
<evidence type="ECO:0000303" key="3">
    <source>
    </source>
</evidence>
<evidence type="ECO:0000305" key="4"/>
<evidence type="ECO:0000305" key="5">
    <source>
    </source>
</evidence>
<dbReference type="EC" id="3.2.1.23" evidence="1"/>
<dbReference type="EMBL" id="X82287">
    <property type="protein sequence ID" value="CAA57731.1"/>
    <property type="molecule type" value="Genomic_DNA"/>
</dbReference>
<dbReference type="RefSeq" id="WP_025015979.1">
    <property type="nucleotide sequence ID" value="NZ_LT907933.1"/>
</dbReference>
<dbReference type="SMR" id="Q48847"/>
<dbReference type="GO" id="GO:0009341">
    <property type="term" value="C:beta-galactosidase complex"/>
    <property type="evidence" value="ECO:0007669"/>
    <property type="project" value="InterPro"/>
</dbReference>
<dbReference type="GO" id="GO:0004565">
    <property type="term" value="F:beta-galactosidase activity"/>
    <property type="evidence" value="ECO:0007669"/>
    <property type="project" value="UniProtKB-EC"/>
</dbReference>
<dbReference type="GO" id="GO:0030246">
    <property type="term" value="F:carbohydrate binding"/>
    <property type="evidence" value="ECO:0007669"/>
    <property type="project" value="InterPro"/>
</dbReference>
<dbReference type="GO" id="GO:0005990">
    <property type="term" value="P:lactose catabolic process"/>
    <property type="evidence" value="ECO:0007669"/>
    <property type="project" value="TreeGrafter"/>
</dbReference>
<dbReference type="Gene3D" id="2.70.98.10">
    <property type="match status" value="1"/>
</dbReference>
<dbReference type="InterPro" id="IPR004199">
    <property type="entry name" value="B-gal_small/dom_5"/>
</dbReference>
<dbReference type="InterPro" id="IPR050347">
    <property type="entry name" value="Bact_Beta-galactosidase"/>
</dbReference>
<dbReference type="InterPro" id="IPR011013">
    <property type="entry name" value="Gal_mutarotase_sf_dom"/>
</dbReference>
<dbReference type="InterPro" id="IPR014718">
    <property type="entry name" value="GH-type_carb-bd"/>
</dbReference>
<dbReference type="PANTHER" id="PTHR46323">
    <property type="entry name" value="BETA-GALACTOSIDASE"/>
    <property type="match status" value="1"/>
</dbReference>
<dbReference type="PANTHER" id="PTHR46323:SF2">
    <property type="entry name" value="BETA-GALACTOSIDASE"/>
    <property type="match status" value="1"/>
</dbReference>
<dbReference type="Pfam" id="PF02929">
    <property type="entry name" value="Bgal_small_N"/>
    <property type="match status" value="1"/>
</dbReference>
<dbReference type="SMART" id="SM01038">
    <property type="entry name" value="Bgal_small_N"/>
    <property type="match status" value="1"/>
</dbReference>
<dbReference type="SUPFAM" id="SSF74650">
    <property type="entry name" value="Galactose mutarotase-like"/>
    <property type="match status" value="1"/>
</dbReference>
<reference key="1">
    <citation type="journal article" date="1995" name="Microbiology">
        <title>Two genes encoding the beta-galactosidase of Lactobacillus sake.</title>
        <authorList>
            <person name="Obst M."/>
            <person name="Meding E.R."/>
            <person name="Vogel R.F."/>
            <person name="Hammes W.P."/>
        </authorList>
    </citation>
    <scope>NUCLEOTIDE SEQUENCE [GENOMIC DNA]</scope>
    <scope>FUNCTION</scope>
    <scope>SUBUNIT</scope>
    <source>
        <strain>ATCC 15521 / DSM 20017 / JCM 1157 / CCUG 30501 / CIP 103139 / KCTC 3603 / NBRC 15893 / NCIMB 13090 / T.S</strain>
    </source>
</reference>
<gene>
    <name evidence="3" type="primary">lacM</name>
</gene>
<comment type="function">
    <text evidence="2">Component of a beta-galactosidase.</text>
</comment>
<comment type="catalytic activity">
    <reaction evidence="1">
        <text>Hydrolysis of terminal non-reducing beta-D-galactose residues in beta-D-galactosides.</text>
        <dbReference type="EC" id="3.2.1.23"/>
    </reaction>
</comment>
<comment type="subunit">
    <text evidence="5">Heterodimer of a large (LacL) and a small subunit (LacM).</text>
</comment>
<comment type="similarity">
    <text evidence="4">Belongs to the bacterial beta-galactosidase small subunit family.</text>
</comment>
<organism>
    <name type="scientific">Latilactobacillus sakei</name>
    <name type="common">Lactobacillus sakei</name>
    <dbReference type="NCBI Taxonomy" id="1599"/>
    <lineage>
        <taxon>Bacteria</taxon>
        <taxon>Bacillati</taxon>
        <taxon>Bacillota</taxon>
        <taxon>Bacilli</taxon>
        <taxon>Lactobacillales</taxon>
        <taxon>Lactobacillaceae</taxon>
        <taxon>Latilactobacillus</taxon>
    </lineage>
</organism>
<sequence>MANTNKRLAVIFGDVTLGLKGPDFHYLFSYQTGGPESLRIQGKEWLYRSPKPTFWRATTDNDRGNQFPLKSGMWLAADQFIACQSITVAIDGQTIPLPIAPENNRYSGRETAQEVTVTYTYQTITTPQTTVEVSYTIQASGKIRVAVTYHGQAGLPSLPVFGLRFVMPTPATRFIYQGLSGETYPDRMAGGIAGEYEVTGLPVTPYLVPQDCGVHMATDWVTIYRQAVLDNCLHEPVETGLKFKMVDQPFAFSCLPYTAEELENATHHSELPAPHRTVLNLLGAVRGVGGIDSWGSDVEVAYQIDATQDRHFEFEISF</sequence>
<keyword id="KW-0326">Glycosidase</keyword>
<keyword id="KW-0378">Hydrolase</keyword>
<proteinExistence type="evidence at protein level"/>
<protein>
    <recommendedName>
        <fullName evidence="5">Beta-galactosidase small subunit</fullName>
        <shortName evidence="5">Beta-gal small subunit</shortName>
        <ecNumber evidence="1">3.2.1.23</ecNumber>
    </recommendedName>
</protein>
<accession>Q48847</accession>
<name>BGAM_LATSK</name>
<feature type="chain" id="PRO_0000057671" description="Beta-galactosidase small subunit">
    <location>
        <begin position="1"/>
        <end position="318"/>
    </location>
</feature>